<keyword id="KW-0068">Autocatalytic cleavage</keyword>
<keyword id="KW-0227">DNA damage</keyword>
<keyword id="KW-0234">DNA repair</keyword>
<keyword id="KW-0235">DNA replication</keyword>
<keyword id="KW-0238">DNA-binding</keyword>
<keyword id="KW-0378">Hydrolase</keyword>
<keyword id="KW-1185">Reference proteome</keyword>
<keyword id="KW-0678">Repressor</keyword>
<keyword id="KW-0742">SOS response</keyword>
<keyword id="KW-0804">Transcription</keyword>
<keyword id="KW-0805">Transcription regulation</keyword>
<organism>
    <name type="scientific">Paraburkholderia xenovorans (strain LB400)</name>
    <dbReference type="NCBI Taxonomy" id="266265"/>
    <lineage>
        <taxon>Bacteria</taxon>
        <taxon>Pseudomonadati</taxon>
        <taxon>Pseudomonadota</taxon>
        <taxon>Betaproteobacteria</taxon>
        <taxon>Burkholderiales</taxon>
        <taxon>Burkholderiaceae</taxon>
        <taxon>Paraburkholderia</taxon>
    </lineage>
</organism>
<reference key="1">
    <citation type="journal article" date="2006" name="Proc. Natl. Acad. Sci. U.S.A.">
        <title>Burkholderia xenovorans LB400 harbors a multi-replicon, 9.73-Mbp genome shaped for versatility.</title>
        <authorList>
            <person name="Chain P.S.G."/>
            <person name="Denef V.J."/>
            <person name="Konstantinidis K.T."/>
            <person name="Vergez L.M."/>
            <person name="Agullo L."/>
            <person name="Reyes V.L."/>
            <person name="Hauser L."/>
            <person name="Cordova M."/>
            <person name="Gomez L."/>
            <person name="Gonzalez M."/>
            <person name="Land M."/>
            <person name="Lao V."/>
            <person name="Larimer F."/>
            <person name="LiPuma J.J."/>
            <person name="Mahenthiralingam E."/>
            <person name="Malfatti S.A."/>
            <person name="Marx C.J."/>
            <person name="Parnell J.J."/>
            <person name="Ramette A."/>
            <person name="Richardson P."/>
            <person name="Seeger M."/>
            <person name="Smith D."/>
            <person name="Spilker T."/>
            <person name="Sul W.J."/>
            <person name="Tsoi T.V."/>
            <person name="Ulrich L.E."/>
            <person name="Zhulin I.B."/>
            <person name="Tiedje J.M."/>
        </authorList>
    </citation>
    <scope>NUCLEOTIDE SEQUENCE [LARGE SCALE GENOMIC DNA]</scope>
    <source>
        <strain>LB400</strain>
    </source>
</reference>
<name>LEXA_PARXL</name>
<evidence type="ECO:0000255" key="1">
    <source>
        <dbReference type="HAMAP-Rule" id="MF_00015"/>
    </source>
</evidence>
<gene>
    <name evidence="1" type="primary">lexA</name>
    <name type="ordered locus">Bxeno_A1964</name>
    <name type="ORF">Bxe_A2471</name>
</gene>
<protein>
    <recommendedName>
        <fullName evidence="1">LexA repressor</fullName>
        <ecNumber evidence="1">3.4.21.88</ecNumber>
    </recommendedName>
</protein>
<feature type="chain" id="PRO_1000001275" description="LexA repressor">
    <location>
        <begin position="1"/>
        <end position="216"/>
    </location>
</feature>
<feature type="DNA-binding region" description="H-T-H motif" evidence="1">
    <location>
        <begin position="28"/>
        <end position="48"/>
    </location>
</feature>
<feature type="active site" description="For autocatalytic cleavage activity" evidence="1">
    <location>
        <position position="134"/>
    </location>
</feature>
<feature type="active site" description="For autocatalytic cleavage activity" evidence="1">
    <location>
        <position position="171"/>
    </location>
</feature>
<feature type="site" description="Cleavage; by autolysis" evidence="1">
    <location>
        <begin position="99"/>
        <end position="100"/>
    </location>
</feature>
<proteinExistence type="inferred from homology"/>
<sequence length="216" mass="23434">MTKLTARQQQVFDLIRRAIERTGFPPTRAEIAAELGFSSANSAEEHLRALARKGVIELAAGASRGIRLLAGPEDSPHQFTLPHASIMQLSLPLIGRVAAGSPILAQEHISQHYACDPALFSSKPDYLLKVRGLSMRDAGIFDGDLLAVQKKSEAKDGQIVIARLGDDVTVKRLKRRPNGLELIAENPDYENIFVETGSAEFALEGIAVGLIRPGEF</sequence>
<comment type="function">
    <text evidence="1">Represses a number of genes involved in the response to DNA damage (SOS response), including recA and lexA. In the presence of single-stranded DNA, RecA interacts with LexA causing an autocatalytic cleavage which disrupts the DNA-binding part of LexA, leading to derepression of the SOS regulon and eventually DNA repair.</text>
</comment>
<comment type="catalytic activity">
    <reaction evidence="1">
        <text>Hydrolysis of Ala-|-Gly bond in repressor LexA.</text>
        <dbReference type="EC" id="3.4.21.88"/>
    </reaction>
</comment>
<comment type="subunit">
    <text evidence="1">Homodimer.</text>
</comment>
<comment type="similarity">
    <text evidence="1">Belongs to the peptidase S24 family.</text>
</comment>
<accession>Q13ZI7</accession>
<dbReference type="EC" id="3.4.21.88" evidence="1"/>
<dbReference type="EMBL" id="CP000270">
    <property type="protein sequence ID" value="ABE30502.1"/>
    <property type="molecule type" value="Genomic_DNA"/>
</dbReference>
<dbReference type="RefSeq" id="WP_007182127.1">
    <property type="nucleotide sequence ID" value="NZ_CP008760.1"/>
</dbReference>
<dbReference type="SMR" id="Q13ZI7"/>
<dbReference type="STRING" id="266265.Bxe_A2471"/>
<dbReference type="MEROPS" id="S24.001"/>
<dbReference type="KEGG" id="bxb:DR64_162"/>
<dbReference type="KEGG" id="bxe:Bxe_A2471"/>
<dbReference type="eggNOG" id="COG1974">
    <property type="taxonomic scope" value="Bacteria"/>
</dbReference>
<dbReference type="OrthoDB" id="9802364at2"/>
<dbReference type="Proteomes" id="UP000001817">
    <property type="component" value="Chromosome 1"/>
</dbReference>
<dbReference type="GO" id="GO:0003677">
    <property type="term" value="F:DNA binding"/>
    <property type="evidence" value="ECO:0007669"/>
    <property type="project" value="UniProtKB-UniRule"/>
</dbReference>
<dbReference type="GO" id="GO:0004252">
    <property type="term" value="F:serine-type endopeptidase activity"/>
    <property type="evidence" value="ECO:0007669"/>
    <property type="project" value="UniProtKB-UniRule"/>
</dbReference>
<dbReference type="GO" id="GO:0006281">
    <property type="term" value="P:DNA repair"/>
    <property type="evidence" value="ECO:0007669"/>
    <property type="project" value="UniProtKB-UniRule"/>
</dbReference>
<dbReference type="GO" id="GO:0006260">
    <property type="term" value="P:DNA replication"/>
    <property type="evidence" value="ECO:0007669"/>
    <property type="project" value="UniProtKB-UniRule"/>
</dbReference>
<dbReference type="GO" id="GO:0045892">
    <property type="term" value="P:negative regulation of DNA-templated transcription"/>
    <property type="evidence" value="ECO:0007669"/>
    <property type="project" value="UniProtKB-UniRule"/>
</dbReference>
<dbReference type="GO" id="GO:0006508">
    <property type="term" value="P:proteolysis"/>
    <property type="evidence" value="ECO:0007669"/>
    <property type="project" value="InterPro"/>
</dbReference>
<dbReference type="GO" id="GO:0009432">
    <property type="term" value="P:SOS response"/>
    <property type="evidence" value="ECO:0007669"/>
    <property type="project" value="UniProtKB-UniRule"/>
</dbReference>
<dbReference type="CDD" id="cd06529">
    <property type="entry name" value="S24_LexA-like"/>
    <property type="match status" value="1"/>
</dbReference>
<dbReference type="FunFam" id="1.10.10.10:FF:000009">
    <property type="entry name" value="LexA repressor"/>
    <property type="match status" value="1"/>
</dbReference>
<dbReference type="FunFam" id="2.10.109.10:FF:000001">
    <property type="entry name" value="LexA repressor"/>
    <property type="match status" value="1"/>
</dbReference>
<dbReference type="Gene3D" id="2.10.109.10">
    <property type="entry name" value="Umud Fragment, subunit A"/>
    <property type="match status" value="1"/>
</dbReference>
<dbReference type="Gene3D" id="1.10.10.10">
    <property type="entry name" value="Winged helix-like DNA-binding domain superfamily/Winged helix DNA-binding domain"/>
    <property type="match status" value="1"/>
</dbReference>
<dbReference type="HAMAP" id="MF_00015">
    <property type="entry name" value="LexA"/>
    <property type="match status" value="1"/>
</dbReference>
<dbReference type="InterPro" id="IPR006200">
    <property type="entry name" value="LexA"/>
</dbReference>
<dbReference type="InterPro" id="IPR039418">
    <property type="entry name" value="LexA-like"/>
</dbReference>
<dbReference type="InterPro" id="IPR036286">
    <property type="entry name" value="LexA/Signal_pep-like_sf"/>
</dbReference>
<dbReference type="InterPro" id="IPR006199">
    <property type="entry name" value="LexA_DNA-bd_dom"/>
</dbReference>
<dbReference type="InterPro" id="IPR050077">
    <property type="entry name" value="LexA_repressor"/>
</dbReference>
<dbReference type="InterPro" id="IPR006197">
    <property type="entry name" value="Peptidase_S24_LexA"/>
</dbReference>
<dbReference type="InterPro" id="IPR015927">
    <property type="entry name" value="Peptidase_S24_S26A/B/C"/>
</dbReference>
<dbReference type="InterPro" id="IPR036388">
    <property type="entry name" value="WH-like_DNA-bd_sf"/>
</dbReference>
<dbReference type="InterPro" id="IPR036390">
    <property type="entry name" value="WH_DNA-bd_sf"/>
</dbReference>
<dbReference type="NCBIfam" id="TIGR00498">
    <property type="entry name" value="lexA"/>
    <property type="match status" value="1"/>
</dbReference>
<dbReference type="PANTHER" id="PTHR33516">
    <property type="entry name" value="LEXA REPRESSOR"/>
    <property type="match status" value="1"/>
</dbReference>
<dbReference type="PANTHER" id="PTHR33516:SF2">
    <property type="entry name" value="LEXA REPRESSOR-RELATED"/>
    <property type="match status" value="1"/>
</dbReference>
<dbReference type="Pfam" id="PF01726">
    <property type="entry name" value="LexA_DNA_bind"/>
    <property type="match status" value="1"/>
</dbReference>
<dbReference type="Pfam" id="PF00717">
    <property type="entry name" value="Peptidase_S24"/>
    <property type="match status" value="1"/>
</dbReference>
<dbReference type="PRINTS" id="PR00726">
    <property type="entry name" value="LEXASERPTASE"/>
</dbReference>
<dbReference type="SUPFAM" id="SSF51306">
    <property type="entry name" value="LexA/Signal peptidase"/>
    <property type="match status" value="1"/>
</dbReference>
<dbReference type="SUPFAM" id="SSF46785">
    <property type="entry name" value="Winged helix' DNA-binding domain"/>
    <property type="match status" value="1"/>
</dbReference>